<organism>
    <name type="scientific">Corynebacterium jeikeium (strain K411)</name>
    <dbReference type="NCBI Taxonomy" id="306537"/>
    <lineage>
        <taxon>Bacteria</taxon>
        <taxon>Bacillati</taxon>
        <taxon>Actinomycetota</taxon>
        <taxon>Actinomycetes</taxon>
        <taxon>Mycobacteriales</taxon>
        <taxon>Corynebacteriaceae</taxon>
        <taxon>Corynebacterium</taxon>
    </lineage>
</organism>
<feature type="chain" id="PRO_0000076660" description="Aconitate hydratase A">
    <location>
        <begin position="1"/>
        <end position="936"/>
    </location>
</feature>
<feature type="region of interest" description="Disordered" evidence="5">
    <location>
        <begin position="401"/>
        <end position="449"/>
    </location>
</feature>
<feature type="compositionally biased region" description="Polar residues" evidence="5">
    <location>
        <begin position="412"/>
        <end position="422"/>
    </location>
</feature>
<feature type="binding site" evidence="2">
    <location>
        <position position="472"/>
    </location>
    <ligand>
        <name>[4Fe-4S] cluster</name>
        <dbReference type="ChEBI" id="CHEBI:49883"/>
    </ligand>
</feature>
<feature type="binding site" evidence="2">
    <location>
        <position position="538"/>
    </location>
    <ligand>
        <name>[4Fe-4S] cluster</name>
        <dbReference type="ChEBI" id="CHEBI:49883"/>
    </ligand>
</feature>
<feature type="binding site" evidence="2">
    <location>
        <position position="541"/>
    </location>
    <ligand>
        <name>[4Fe-4S] cluster</name>
        <dbReference type="ChEBI" id="CHEBI:49883"/>
    </ligand>
</feature>
<sequence>MAESINSFDSKSTLQVGEKSYDYFALDAVPGMEKLPYSLKVLGENLLRNEDGKNITREHIEAIANWDPSAEPNFEIQFTPARVIMQDFTGVACIVDLATIRDAVVALGGDADDVNPLNPAEMVIDHSVIIEAFGDSDALEKNVEIEYQRNDERYKFLRWGTGAFENFRVVPPGTGIVHQVNIEYLARSVFDNNGLAYPDTCVGTDSHTTMENGLGILGWGVGGIEAEAAMLGQPISMLIPRVVGFKLTGEIPTGVTATDVVLTITDMLRQHGVVGKFVEFYGKGVGELPLANRATIGNMSPEFGSTAAMFPIDEETVKYLELTGRDQETLERVEAYAKAQGMWLDPEKEVEYSEYLELDLSTVVPSIAGPKRPQDRIELNDSKAQFRKDLHNYVEADASAVTPDFDAEGPATENTSAQTAGTPASAADAKGNIPSAAAGAEGRPSNPVTVNYNGEDIELDHGMVAIASITSCTNTSNPSVMVGAGLLARNAAAKGLKSAPWVKTSMAPGSQVVNGYYEKAGLWKDLEAMGFYLVGYGCTTCIGNSGPLPEEISAGINEGDLAATAVLSGNRNFEGRINPDVKMNYLASPILVIAYAIAGTMDFDFETQPLGQDQDGNDVFLKDIWPSTEDIEEVIASSITKDLYAEDYANVFEGDERWRSLDVPSGKTFDWDPKSTYIRKAPYFDGMSKEPEAVNDVKGARVLALLGDSVTTDHISPASTIKPGTPAAQYLDANGVERKDYNSLGARRGNHEVMVRGTFANIRLQNQLLDGVSGGYTRDFTQEGGPQSFIYDAAMNYQKENTPLVVLGGKEYGTGSSRDWAAKGTLLLGVKAVIAESFERIHRSNLIGMGVVPLQFPEGESWKSLGIEGTETFDIEGIEELNNGSTPKTVKVTATKENGEKIEFDAVTRIDTPGEADYYRNGGILQFVLRNMMSGK</sequence>
<keyword id="KW-0408">Iron</keyword>
<keyword id="KW-0411">Iron-sulfur</keyword>
<keyword id="KW-0456">Lyase</keyword>
<keyword id="KW-0479">Metal-binding</keyword>
<keyword id="KW-1185">Reference proteome</keyword>
<keyword id="KW-0694">RNA-binding</keyword>
<keyword id="KW-0816">Tricarboxylic acid cycle</keyword>
<accession>Q4JVM4</accession>
<dbReference type="EC" id="4.2.1.3" evidence="3"/>
<dbReference type="EC" id="4.2.1.99" evidence="4"/>
<dbReference type="EMBL" id="CR931997">
    <property type="protein sequence ID" value="CAI37133.1"/>
    <property type="molecule type" value="Genomic_DNA"/>
</dbReference>
<dbReference type="RefSeq" id="WP_011273549.1">
    <property type="nucleotide sequence ID" value="NC_007164.1"/>
</dbReference>
<dbReference type="SMR" id="Q4JVM4"/>
<dbReference type="STRING" id="306537.jk0969"/>
<dbReference type="KEGG" id="cjk:jk0969"/>
<dbReference type="PATRIC" id="fig|306537.10.peg.980"/>
<dbReference type="eggNOG" id="COG1048">
    <property type="taxonomic scope" value="Bacteria"/>
</dbReference>
<dbReference type="HOGENOM" id="CLU_013476_2_1_11"/>
<dbReference type="OrthoDB" id="9764318at2"/>
<dbReference type="UniPathway" id="UPA00223">
    <property type="reaction ID" value="UER00718"/>
</dbReference>
<dbReference type="UniPathway" id="UPA00946"/>
<dbReference type="Proteomes" id="UP000000545">
    <property type="component" value="Chromosome"/>
</dbReference>
<dbReference type="GO" id="GO:0047456">
    <property type="term" value="F:2-methylisocitrate dehydratase activity"/>
    <property type="evidence" value="ECO:0000250"/>
    <property type="project" value="UniProtKB"/>
</dbReference>
<dbReference type="GO" id="GO:0051539">
    <property type="term" value="F:4 iron, 4 sulfur cluster binding"/>
    <property type="evidence" value="ECO:0000250"/>
    <property type="project" value="UniProtKB"/>
</dbReference>
<dbReference type="GO" id="GO:0003994">
    <property type="term" value="F:aconitate hydratase activity"/>
    <property type="evidence" value="ECO:0000250"/>
    <property type="project" value="UniProtKB"/>
</dbReference>
<dbReference type="GO" id="GO:0046872">
    <property type="term" value="F:metal ion binding"/>
    <property type="evidence" value="ECO:0007669"/>
    <property type="project" value="UniProtKB-KW"/>
</dbReference>
<dbReference type="GO" id="GO:0003730">
    <property type="term" value="F:mRNA 3'-UTR binding"/>
    <property type="evidence" value="ECO:0000250"/>
    <property type="project" value="UniProtKB"/>
</dbReference>
<dbReference type="GO" id="GO:0003729">
    <property type="term" value="F:mRNA binding"/>
    <property type="evidence" value="ECO:0000250"/>
    <property type="project" value="UniProtKB"/>
</dbReference>
<dbReference type="GO" id="GO:0019679">
    <property type="term" value="P:propionate metabolic process, methylcitrate cycle"/>
    <property type="evidence" value="ECO:0000250"/>
    <property type="project" value="UniProtKB"/>
</dbReference>
<dbReference type="GO" id="GO:0006099">
    <property type="term" value="P:tricarboxylic acid cycle"/>
    <property type="evidence" value="ECO:0000250"/>
    <property type="project" value="UniProtKB"/>
</dbReference>
<dbReference type="CDD" id="cd01586">
    <property type="entry name" value="AcnA_IRP"/>
    <property type="match status" value="1"/>
</dbReference>
<dbReference type="CDD" id="cd01580">
    <property type="entry name" value="AcnA_IRP_Swivel"/>
    <property type="match status" value="1"/>
</dbReference>
<dbReference type="FunFam" id="3.20.19.10:FF:000001">
    <property type="entry name" value="Aconitate hydratase"/>
    <property type="match status" value="1"/>
</dbReference>
<dbReference type="FunFam" id="3.30.499.10:FF:000002">
    <property type="entry name" value="Aconitate hydratase"/>
    <property type="match status" value="1"/>
</dbReference>
<dbReference type="FunFam" id="3.30.499.10:FF:000009">
    <property type="entry name" value="Aconitate hydratase"/>
    <property type="match status" value="1"/>
</dbReference>
<dbReference type="Gene3D" id="6.10.190.10">
    <property type="match status" value="1"/>
</dbReference>
<dbReference type="Gene3D" id="3.30.499.10">
    <property type="entry name" value="Aconitase, domain 3"/>
    <property type="match status" value="2"/>
</dbReference>
<dbReference type="Gene3D" id="3.20.19.10">
    <property type="entry name" value="Aconitase, domain 4"/>
    <property type="match status" value="1"/>
</dbReference>
<dbReference type="InterPro" id="IPR044137">
    <property type="entry name" value="AcnA_IRP_Swivel"/>
</dbReference>
<dbReference type="InterPro" id="IPR015931">
    <property type="entry name" value="Acnase/IPM_dHydase_lsu_aba_1/3"/>
</dbReference>
<dbReference type="InterPro" id="IPR001030">
    <property type="entry name" value="Acoase/IPM_deHydtase_lsu_aba"/>
</dbReference>
<dbReference type="InterPro" id="IPR015928">
    <property type="entry name" value="Aconitase/3IPM_dehydase_swvl"/>
</dbReference>
<dbReference type="InterPro" id="IPR006249">
    <property type="entry name" value="Aconitase/IRP2"/>
</dbReference>
<dbReference type="InterPro" id="IPR018136">
    <property type="entry name" value="Aconitase_4Fe-4S_BS"/>
</dbReference>
<dbReference type="InterPro" id="IPR036008">
    <property type="entry name" value="Aconitase_4Fe-4S_dom"/>
</dbReference>
<dbReference type="InterPro" id="IPR000573">
    <property type="entry name" value="AconitaseA/IPMdHydase_ssu_swvl"/>
</dbReference>
<dbReference type="NCBIfam" id="TIGR01341">
    <property type="entry name" value="aconitase_1"/>
    <property type="match status" value="1"/>
</dbReference>
<dbReference type="NCBIfam" id="NF006757">
    <property type="entry name" value="PRK09277.1"/>
    <property type="match status" value="1"/>
</dbReference>
<dbReference type="NCBIfam" id="NF009520">
    <property type="entry name" value="PRK12881.1"/>
    <property type="match status" value="1"/>
</dbReference>
<dbReference type="PANTHER" id="PTHR11670">
    <property type="entry name" value="ACONITASE/IRON-RESPONSIVE ELEMENT FAMILY MEMBER"/>
    <property type="match status" value="1"/>
</dbReference>
<dbReference type="Pfam" id="PF00330">
    <property type="entry name" value="Aconitase"/>
    <property type="match status" value="1"/>
</dbReference>
<dbReference type="Pfam" id="PF00694">
    <property type="entry name" value="Aconitase_C"/>
    <property type="match status" value="1"/>
</dbReference>
<dbReference type="PRINTS" id="PR00415">
    <property type="entry name" value="ACONITASE"/>
</dbReference>
<dbReference type="SUPFAM" id="SSF53732">
    <property type="entry name" value="Aconitase iron-sulfur domain"/>
    <property type="match status" value="1"/>
</dbReference>
<dbReference type="SUPFAM" id="SSF52016">
    <property type="entry name" value="LeuD/IlvD-like"/>
    <property type="match status" value="1"/>
</dbReference>
<dbReference type="PROSITE" id="PS00450">
    <property type="entry name" value="ACONITASE_1"/>
    <property type="match status" value="1"/>
</dbReference>
<dbReference type="PROSITE" id="PS01244">
    <property type="entry name" value="ACONITASE_2"/>
    <property type="match status" value="1"/>
</dbReference>
<comment type="function">
    <text evidence="1 3 4">Involved in the catabolism of short chain fatty acids (SCFA) via the tricarboxylic acid (TCA)(acetyl degradation route) and probably via the 2-methylcitrate cycle I (propionate degradation route). Catalyzes the reversible isomerization of citrate to isocitrate via cis-aconitate. Could catalyze the hydration of 2-methyl-cis-aconitate to yield (2R,3S)-2-methylisocitrate. The apo form of AcnA functions as a RNA-binding regulatory protein.</text>
</comment>
<comment type="catalytic activity">
    <reaction evidence="3">
        <text>citrate = D-threo-isocitrate</text>
        <dbReference type="Rhea" id="RHEA:10336"/>
        <dbReference type="ChEBI" id="CHEBI:15562"/>
        <dbReference type="ChEBI" id="CHEBI:16947"/>
        <dbReference type="EC" id="4.2.1.3"/>
    </reaction>
</comment>
<comment type="catalytic activity">
    <reaction evidence="4">
        <text>(2S,3R)-3-hydroxybutane-1,2,3-tricarboxylate = 2-methyl-cis-aconitate + H2O</text>
        <dbReference type="Rhea" id="RHEA:17941"/>
        <dbReference type="ChEBI" id="CHEBI:15377"/>
        <dbReference type="ChEBI" id="CHEBI:57429"/>
        <dbReference type="ChEBI" id="CHEBI:57872"/>
        <dbReference type="EC" id="4.2.1.99"/>
    </reaction>
</comment>
<comment type="cofactor">
    <cofactor evidence="3">
        <name>[4Fe-4S] cluster</name>
        <dbReference type="ChEBI" id="CHEBI:49883"/>
    </cofactor>
    <text evidence="3">Binds 1 [4Fe-4S] cluster per subunit.</text>
</comment>
<comment type="pathway">
    <text evidence="3">Carbohydrate metabolism; tricarboxylic acid cycle; isocitrate from oxaloacetate: step 2/2.</text>
</comment>
<comment type="pathway">
    <text evidence="3">Organic acid metabolism; propanoate degradation.</text>
</comment>
<comment type="subunit">
    <text evidence="3">Monomer.</text>
</comment>
<comment type="similarity">
    <text evidence="6">Belongs to the aconitase/IPM isomerase family.</text>
</comment>
<protein>
    <recommendedName>
        <fullName evidence="3">Aconitate hydratase A</fullName>
        <shortName evidence="3">ACN</shortName>
        <shortName evidence="3">Aconitase</shortName>
        <ecNumber evidence="3">4.2.1.3</ecNumber>
    </recommendedName>
    <alternativeName>
        <fullName evidence="4">(2R,3S)-2-methylisocitrate dehydratase</fullName>
    </alternativeName>
    <alternativeName>
        <fullName evidence="4">(2S,3R)-3-hydroxybutane-1,2,3-tricarboxylate dehydratase</fullName>
    </alternativeName>
    <alternativeName>
        <fullName evidence="1">Iron-responsive protein-like</fullName>
        <shortName evidence="1">IRP-like</shortName>
    </alternativeName>
    <alternativeName>
        <fullName evidence="4">Probable 2-methyl-cis-aconitate hydratase</fullName>
        <ecNumber evidence="4">4.2.1.99</ecNumber>
    </alternativeName>
    <alternativeName>
        <fullName evidence="1">RNA-binding protein</fullName>
    </alternativeName>
</protein>
<proteinExistence type="inferred from homology"/>
<gene>
    <name type="primary">acn</name>
    <name type="ordered locus">jk0969</name>
</gene>
<reference key="1">
    <citation type="journal article" date="2005" name="J. Bacteriol.">
        <title>Complete genome sequence and analysis of the multiresistant nosocomial pathogen Corynebacterium jeikeium K411, a lipid-requiring bacterium of the human skin flora.</title>
        <authorList>
            <person name="Tauch A."/>
            <person name="Kaiser O."/>
            <person name="Hain T."/>
            <person name="Goesmann A."/>
            <person name="Weisshaar B."/>
            <person name="Albersmeier A."/>
            <person name="Bekel T."/>
            <person name="Bischoff N."/>
            <person name="Brune I."/>
            <person name="Chakraborty T."/>
            <person name="Kalinowski J."/>
            <person name="Meyer F."/>
            <person name="Rupp O."/>
            <person name="Schneiker S."/>
            <person name="Viehoever P."/>
            <person name="Puehler A."/>
        </authorList>
    </citation>
    <scope>NUCLEOTIDE SEQUENCE [LARGE SCALE GENOMIC DNA]</scope>
    <source>
        <strain>K411</strain>
    </source>
</reference>
<name>ACNA_CORJK</name>
<evidence type="ECO:0000250" key="1">
    <source>
        <dbReference type="UniProtKB" id="P09339"/>
    </source>
</evidence>
<evidence type="ECO:0000250" key="2">
    <source>
        <dbReference type="UniProtKB" id="P36683"/>
    </source>
</evidence>
<evidence type="ECO:0000250" key="3">
    <source>
        <dbReference type="UniProtKB" id="Q8NQ98"/>
    </source>
</evidence>
<evidence type="ECO:0000250" key="4">
    <source>
        <dbReference type="UniProtKB" id="Q8ZP52"/>
    </source>
</evidence>
<evidence type="ECO:0000256" key="5">
    <source>
        <dbReference type="SAM" id="MobiDB-lite"/>
    </source>
</evidence>
<evidence type="ECO:0000305" key="6"/>